<sequence>MAKQDVIEMEGTVVESLPNAMFRVELDNSFNILAHISGKIRRNYIKILPGDRVKVELTPYDLTKGRITYRLRK</sequence>
<feature type="chain" id="PRO_0000095794" description="Translation initiation factor IF-1">
    <location>
        <begin position="1"/>
        <end position="73"/>
    </location>
</feature>
<feature type="domain" description="S1-like" evidence="1">
    <location>
        <begin position="1"/>
        <end position="72"/>
    </location>
</feature>
<reference key="1">
    <citation type="journal article" date="2003" name="DNA Res.">
        <title>Complete genome structure of Gloeobacter violaceus PCC 7421, a cyanobacterium that lacks thylakoids.</title>
        <authorList>
            <person name="Nakamura Y."/>
            <person name="Kaneko T."/>
            <person name="Sato S."/>
            <person name="Mimuro M."/>
            <person name="Miyashita H."/>
            <person name="Tsuchiya T."/>
            <person name="Sasamoto S."/>
            <person name="Watanabe A."/>
            <person name="Kawashima K."/>
            <person name="Kishida Y."/>
            <person name="Kiyokawa C."/>
            <person name="Kohara M."/>
            <person name="Matsumoto M."/>
            <person name="Matsuno A."/>
            <person name="Nakazaki N."/>
            <person name="Shimpo S."/>
            <person name="Takeuchi C."/>
            <person name="Yamada M."/>
            <person name="Tabata S."/>
        </authorList>
    </citation>
    <scope>NUCLEOTIDE SEQUENCE [LARGE SCALE GENOMIC DNA]</scope>
    <source>
        <strain>ATCC 29082 / PCC 7421</strain>
    </source>
</reference>
<keyword id="KW-0963">Cytoplasm</keyword>
<keyword id="KW-0396">Initiation factor</keyword>
<keyword id="KW-0648">Protein biosynthesis</keyword>
<keyword id="KW-1185">Reference proteome</keyword>
<keyword id="KW-0694">RNA-binding</keyword>
<keyword id="KW-0699">rRNA-binding</keyword>
<name>IF1_GLOVI</name>
<gene>
    <name evidence="1" type="primary">infA</name>
    <name type="ordered locus">gsr0413</name>
</gene>
<comment type="function">
    <text evidence="1">One of the essential components for the initiation of protein synthesis. Stabilizes the binding of IF-2 and IF-3 on the 30S subunit to which N-formylmethionyl-tRNA(fMet) subsequently binds. Helps modulate mRNA selection, yielding the 30S pre-initiation complex (PIC). Upon addition of the 50S ribosomal subunit IF-1, IF-2 and IF-3 are released leaving the mature 70S translation initiation complex.</text>
</comment>
<comment type="subunit">
    <text evidence="1">Component of the 30S ribosomal translation pre-initiation complex which assembles on the 30S ribosome in the order IF-2 and IF-3, IF-1 and N-formylmethionyl-tRNA(fMet); mRNA recruitment can occur at any time during PIC assembly.</text>
</comment>
<comment type="subcellular location">
    <subcellularLocation>
        <location evidence="1">Cytoplasm</location>
    </subcellularLocation>
</comment>
<comment type="similarity">
    <text evidence="1">Belongs to the IF-1 family.</text>
</comment>
<accession>Q7NNJ8</accession>
<proteinExistence type="inferred from homology"/>
<dbReference type="EMBL" id="BA000045">
    <property type="protein sequence ID" value="BAC88354.1"/>
    <property type="molecule type" value="Genomic_DNA"/>
</dbReference>
<dbReference type="RefSeq" id="NP_923359.1">
    <property type="nucleotide sequence ID" value="NC_005125.1"/>
</dbReference>
<dbReference type="RefSeq" id="WP_011140416.1">
    <property type="nucleotide sequence ID" value="NC_005125.1"/>
</dbReference>
<dbReference type="SMR" id="Q7NNJ8"/>
<dbReference type="FunCoup" id="Q7NNJ8">
    <property type="interactions" value="61"/>
</dbReference>
<dbReference type="STRING" id="251221.gene:10757885"/>
<dbReference type="EnsemblBacteria" id="BAC88354">
    <property type="protein sequence ID" value="BAC88354"/>
    <property type="gene ID" value="BAC88354"/>
</dbReference>
<dbReference type="KEGG" id="gvi:gsr0413"/>
<dbReference type="PATRIC" id="fig|251221.4.peg.420"/>
<dbReference type="eggNOG" id="COG0361">
    <property type="taxonomic scope" value="Bacteria"/>
</dbReference>
<dbReference type="HOGENOM" id="CLU_151267_1_0_3"/>
<dbReference type="InParanoid" id="Q7NNJ8"/>
<dbReference type="OrthoDB" id="9803250at2"/>
<dbReference type="PhylomeDB" id="Q7NNJ8"/>
<dbReference type="Proteomes" id="UP000000557">
    <property type="component" value="Chromosome"/>
</dbReference>
<dbReference type="GO" id="GO:0005829">
    <property type="term" value="C:cytosol"/>
    <property type="evidence" value="ECO:0000318"/>
    <property type="project" value="GO_Central"/>
</dbReference>
<dbReference type="GO" id="GO:0043022">
    <property type="term" value="F:ribosome binding"/>
    <property type="evidence" value="ECO:0000318"/>
    <property type="project" value="GO_Central"/>
</dbReference>
<dbReference type="GO" id="GO:0019843">
    <property type="term" value="F:rRNA binding"/>
    <property type="evidence" value="ECO:0007669"/>
    <property type="project" value="UniProtKB-UniRule"/>
</dbReference>
<dbReference type="GO" id="GO:0003743">
    <property type="term" value="F:translation initiation factor activity"/>
    <property type="evidence" value="ECO:0007669"/>
    <property type="project" value="UniProtKB-UniRule"/>
</dbReference>
<dbReference type="CDD" id="cd04451">
    <property type="entry name" value="S1_IF1"/>
    <property type="match status" value="1"/>
</dbReference>
<dbReference type="FunFam" id="2.40.50.140:FF:000002">
    <property type="entry name" value="Translation initiation factor IF-1"/>
    <property type="match status" value="1"/>
</dbReference>
<dbReference type="Gene3D" id="2.40.50.140">
    <property type="entry name" value="Nucleic acid-binding proteins"/>
    <property type="match status" value="1"/>
</dbReference>
<dbReference type="HAMAP" id="MF_00075">
    <property type="entry name" value="IF_1"/>
    <property type="match status" value="1"/>
</dbReference>
<dbReference type="InterPro" id="IPR012340">
    <property type="entry name" value="NA-bd_OB-fold"/>
</dbReference>
<dbReference type="InterPro" id="IPR006196">
    <property type="entry name" value="RNA-binding_domain_S1_IF1"/>
</dbReference>
<dbReference type="InterPro" id="IPR003029">
    <property type="entry name" value="S1_domain"/>
</dbReference>
<dbReference type="InterPro" id="IPR004368">
    <property type="entry name" value="TIF_IF1"/>
</dbReference>
<dbReference type="NCBIfam" id="TIGR00008">
    <property type="entry name" value="infA"/>
    <property type="match status" value="1"/>
</dbReference>
<dbReference type="PANTHER" id="PTHR33370">
    <property type="entry name" value="TRANSLATION INITIATION FACTOR IF-1, CHLOROPLASTIC"/>
    <property type="match status" value="1"/>
</dbReference>
<dbReference type="PANTHER" id="PTHR33370:SF1">
    <property type="entry name" value="TRANSLATION INITIATION FACTOR IF-1, CHLOROPLASTIC"/>
    <property type="match status" value="1"/>
</dbReference>
<dbReference type="Pfam" id="PF01176">
    <property type="entry name" value="eIF-1a"/>
    <property type="match status" value="1"/>
</dbReference>
<dbReference type="SMART" id="SM00316">
    <property type="entry name" value="S1"/>
    <property type="match status" value="1"/>
</dbReference>
<dbReference type="SUPFAM" id="SSF50249">
    <property type="entry name" value="Nucleic acid-binding proteins"/>
    <property type="match status" value="1"/>
</dbReference>
<dbReference type="PROSITE" id="PS50832">
    <property type="entry name" value="S1_IF1_TYPE"/>
    <property type="match status" value="1"/>
</dbReference>
<organism>
    <name type="scientific">Gloeobacter violaceus (strain ATCC 29082 / PCC 7421)</name>
    <dbReference type="NCBI Taxonomy" id="251221"/>
    <lineage>
        <taxon>Bacteria</taxon>
        <taxon>Bacillati</taxon>
        <taxon>Cyanobacteriota</taxon>
        <taxon>Cyanophyceae</taxon>
        <taxon>Gloeobacterales</taxon>
        <taxon>Gloeobacteraceae</taxon>
        <taxon>Gloeobacter</taxon>
    </lineage>
</organism>
<evidence type="ECO:0000255" key="1">
    <source>
        <dbReference type="HAMAP-Rule" id="MF_00075"/>
    </source>
</evidence>
<protein>
    <recommendedName>
        <fullName evidence="1">Translation initiation factor IF-1</fullName>
    </recommendedName>
</protein>